<organism>
    <name type="scientific">Mus musculus</name>
    <name type="common">Mouse</name>
    <dbReference type="NCBI Taxonomy" id="10090"/>
    <lineage>
        <taxon>Eukaryota</taxon>
        <taxon>Metazoa</taxon>
        <taxon>Chordata</taxon>
        <taxon>Craniata</taxon>
        <taxon>Vertebrata</taxon>
        <taxon>Euteleostomi</taxon>
        <taxon>Mammalia</taxon>
        <taxon>Eutheria</taxon>
        <taxon>Euarchontoglires</taxon>
        <taxon>Glires</taxon>
        <taxon>Rodentia</taxon>
        <taxon>Myomorpha</taxon>
        <taxon>Muroidea</taxon>
        <taxon>Muridae</taxon>
        <taxon>Murinae</taxon>
        <taxon>Mus</taxon>
        <taxon>Mus</taxon>
    </lineage>
</organism>
<gene>
    <name type="primary">Uqcrc2</name>
</gene>
<proteinExistence type="evidence at protein level"/>
<name>QCR2_MOUSE</name>
<dbReference type="EMBL" id="AK005151">
    <property type="protein sequence ID" value="BAB23845.1"/>
    <property type="molecule type" value="mRNA"/>
</dbReference>
<dbReference type="EMBL" id="AK007669">
    <property type="protein sequence ID" value="BAB25176.1"/>
    <property type="molecule type" value="mRNA"/>
</dbReference>
<dbReference type="EMBL" id="AK077583">
    <property type="protein sequence ID" value="BAC36876.1"/>
    <property type="molecule type" value="mRNA"/>
</dbReference>
<dbReference type="EMBL" id="AK088103">
    <property type="protein sequence ID" value="BAC40146.1"/>
    <property type="molecule type" value="mRNA"/>
</dbReference>
<dbReference type="EMBL" id="BC003423">
    <property type="protein sequence ID" value="AAH03423.1"/>
    <property type="molecule type" value="mRNA"/>
</dbReference>
<dbReference type="CCDS" id="CCDS21795.1"/>
<dbReference type="PIR" id="PC7073">
    <property type="entry name" value="PC7073"/>
</dbReference>
<dbReference type="RefSeq" id="NP_080175.1">
    <property type="nucleotide sequence ID" value="NM_025899.2"/>
</dbReference>
<dbReference type="PDB" id="7O37">
    <property type="method" value="EM"/>
    <property type="resolution" value="3.20 A"/>
    <property type="chains" value="B/M=15-453"/>
</dbReference>
<dbReference type="PDB" id="7O3C">
    <property type="method" value="EM"/>
    <property type="resolution" value="3.30 A"/>
    <property type="chains" value="B/M=15-453"/>
</dbReference>
<dbReference type="PDB" id="7O3E">
    <property type="method" value="EM"/>
    <property type="resolution" value="3.60 A"/>
    <property type="chains" value="B/M=15-453"/>
</dbReference>
<dbReference type="PDB" id="7O3H">
    <property type="method" value="EM"/>
    <property type="resolution" value="2.60 A"/>
    <property type="chains" value="B/M=15-453"/>
</dbReference>
<dbReference type="PDB" id="8IAO">
    <property type="method" value="EM"/>
    <property type="resolution" value="4.20 A"/>
    <property type="chains" value="AB/Ab=1-453"/>
</dbReference>
<dbReference type="PDB" id="8IAR">
    <property type="method" value="EM"/>
    <property type="resolution" value="3.40 A"/>
    <property type="chains" value="AB/Ab=1-453"/>
</dbReference>
<dbReference type="PDB" id="8IB4">
    <property type="method" value="EM"/>
    <property type="resolution" value="4.30 A"/>
    <property type="chains" value="AB/Ab=1-453"/>
</dbReference>
<dbReference type="PDB" id="8IB7">
    <property type="method" value="EM"/>
    <property type="resolution" value="3.40 A"/>
    <property type="chains" value="AB/Ab=1-453"/>
</dbReference>
<dbReference type="PDB" id="8IB9">
    <property type="method" value="EM"/>
    <property type="resolution" value="4.30 A"/>
    <property type="chains" value="AB/Ab=1-453"/>
</dbReference>
<dbReference type="PDB" id="8IBC">
    <property type="method" value="EM"/>
    <property type="resolution" value="3.60 A"/>
    <property type="chains" value="AB/Ab=1-453"/>
</dbReference>
<dbReference type="PDB" id="8IBD">
    <property type="method" value="EM"/>
    <property type="resolution" value="4.20 A"/>
    <property type="chains" value="AB/Ab=1-453"/>
</dbReference>
<dbReference type="PDB" id="8IBG">
    <property type="method" value="EM"/>
    <property type="resolution" value="3.80 A"/>
    <property type="chains" value="AB/Ab=1-453"/>
</dbReference>
<dbReference type="PDB" id="8IC2">
    <property type="method" value="EM"/>
    <property type="resolution" value="6.30 A"/>
    <property type="chains" value="AB/Ab=1-453"/>
</dbReference>
<dbReference type="PDB" id="8IC5">
    <property type="method" value="EM"/>
    <property type="resolution" value="4.10 A"/>
    <property type="chains" value="AB/Ab=1-453"/>
</dbReference>
<dbReference type="PDB" id="8PW5">
    <property type="method" value="EM"/>
    <property type="resolution" value="3.60 A"/>
    <property type="chains" value="B/M=1-453"/>
</dbReference>
<dbReference type="PDB" id="8PW6">
    <property type="method" value="EM"/>
    <property type="resolution" value="3.30 A"/>
    <property type="chains" value="B/M=1-453"/>
</dbReference>
<dbReference type="PDB" id="8PW7">
    <property type="method" value="EM"/>
    <property type="resolution" value="3.50 A"/>
    <property type="chains" value="B/M=1-453"/>
</dbReference>
<dbReference type="PDB" id="8UCA">
    <property type="method" value="EM"/>
    <property type="resolution" value="3.70 A"/>
    <property type="chains" value="3B/3M=15-453"/>
</dbReference>
<dbReference type="PDBsum" id="7O37"/>
<dbReference type="PDBsum" id="7O3C"/>
<dbReference type="PDBsum" id="7O3E"/>
<dbReference type="PDBsum" id="7O3H"/>
<dbReference type="PDBsum" id="8IAO"/>
<dbReference type="PDBsum" id="8IAR"/>
<dbReference type="PDBsum" id="8IB4"/>
<dbReference type="PDBsum" id="8IB7"/>
<dbReference type="PDBsum" id="8IB9"/>
<dbReference type="PDBsum" id="8IBC"/>
<dbReference type="PDBsum" id="8IBD"/>
<dbReference type="PDBsum" id="8IBG"/>
<dbReference type="PDBsum" id="8IC2"/>
<dbReference type="PDBsum" id="8IC5"/>
<dbReference type="PDBsum" id="8PW5"/>
<dbReference type="PDBsum" id="8PW6"/>
<dbReference type="PDBsum" id="8PW7"/>
<dbReference type="PDBsum" id="8UCA"/>
<dbReference type="EMDB" id="EMD-12702"/>
<dbReference type="EMDB" id="EMD-12703"/>
<dbReference type="EMDB" id="EMD-12705"/>
<dbReference type="EMDB" id="EMD-12706"/>
<dbReference type="EMDB" id="EMD-17989"/>
<dbReference type="EMDB" id="EMD-17990"/>
<dbReference type="EMDB" id="EMD-17991"/>
<dbReference type="EMDB" id="EMD-35313"/>
<dbReference type="EMDB" id="EMD-35316"/>
<dbReference type="EMDB" id="EMD-35331"/>
<dbReference type="EMDB" id="EMD-35334"/>
<dbReference type="EMDB" id="EMD-35336"/>
<dbReference type="EMDB" id="EMD-35339"/>
<dbReference type="EMDB" id="EMD-35340"/>
<dbReference type="EMDB" id="EMD-35343"/>
<dbReference type="EMDB" id="EMD-35352"/>
<dbReference type="EMDB" id="EMD-35355"/>
<dbReference type="EMDB" id="EMD-42122"/>
<dbReference type="SMR" id="Q9DB77"/>
<dbReference type="BioGRID" id="211868">
    <property type="interactions" value="95"/>
</dbReference>
<dbReference type="ComplexPortal" id="CPX-563">
    <property type="entry name" value="Mitochondrial respiratory chain complex III"/>
</dbReference>
<dbReference type="CORUM" id="Q9DB77"/>
<dbReference type="FunCoup" id="Q9DB77">
    <property type="interactions" value="1554"/>
</dbReference>
<dbReference type="IntAct" id="Q9DB77">
    <property type="interactions" value="16"/>
</dbReference>
<dbReference type="MINT" id="Q9DB77"/>
<dbReference type="STRING" id="10090.ENSMUSP00000033176"/>
<dbReference type="MEROPS" id="M16.974"/>
<dbReference type="GlyGen" id="Q9DB77">
    <property type="glycosylation" value="2 sites, 1 N-linked glycan (1 site), 1 O-linked glycan (1 site)"/>
</dbReference>
<dbReference type="iPTMnet" id="Q9DB77"/>
<dbReference type="PhosphoSitePlus" id="Q9DB77"/>
<dbReference type="SwissPalm" id="Q9DB77"/>
<dbReference type="jPOST" id="Q9DB77"/>
<dbReference type="PaxDb" id="10090-ENSMUSP00000033176"/>
<dbReference type="PeptideAtlas" id="Q9DB77"/>
<dbReference type="ProteomicsDB" id="300330"/>
<dbReference type="Pumba" id="Q9DB77"/>
<dbReference type="TopDownProteomics" id="Q9DB77"/>
<dbReference type="Antibodypedia" id="1267">
    <property type="antibodies" value="244 antibodies from 30 providers"/>
</dbReference>
<dbReference type="DNASU" id="67003"/>
<dbReference type="Ensembl" id="ENSMUST00000033176.7">
    <property type="protein sequence ID" value="ENSMUSP00000033176.6"/>
    <property type="gene ID" value="ENSMUSG00000030884.13"/>
</dbReference>
<dbReference type="GeneID" id="67003"/>
<dbReference type="KEGG" id="mmu:67003"/>
<dbReference type="UCSC" id="uc009jms.1">
    <property type="organism name" value="mouse"/>
</dbReference>
<dbReference type="AGR" id="MGI:1914253"/>
<dbReference type="CTD" id="7385"/>
<dbReference type="MGI" id="MGI:1914253">
    <property type="gene designation" value="Uqcrc2"/>
</dbReference>
<dbReference type="VEuPathDB" id="HostDB:ENSMUSG00000030884"/>
<dbReference type="eggNOG" id="KOG2583">
    <property type="taxonomic scope" value="Eukaryota"/>
</dbReference>
<dbReference type="GeneTree" id="ENSGT00940000154915"/>
<dbReference type="HOGENOM" id="CLU_009902_0_0_1"/>
<dbReference type="InParanoid" id="Q9DB77"/>
<dbReference type="OMA" id="APKFALY"/>
<dbReference type="OrthoDB" id="6369905at2759"/>
<dbReference type="PhylomeDB" id="Q9DB77"/>
<dbReference type="TreeFam" id="TF105033"/>
<dbReference type="Reactome" id="R-MMU-611105">
    <property type="pathway name" value="Respiratory electron transport"/>
</dbReference>
<dbReference type="Reactome" id="R-MMU-9837999">
    <property type="pathway name" value="Mitochondrial protein degradation"/>
</dbReference>
<dbReference type="Reactome" id="R-MMU-9865881">
    <property type="pathway name" value="Complex III assembly"/>
</dbReference>
<dbReference type="BioGRID-ORCS" id="67003">
    <property type="hits" value="24 hits in 79 CRISPR screens"/>
</dbReference>
<dbReference type="CD-CODE" id="CE726F99">
    <property type="entry name" value="Postsynaptic density"/>
</dbReference>
<dbReference type="ChiTaRS" id="Uqcrc2">
    <property type="organism name" value="mouse"/>
</dbReference>
<dbReference type="PRO" id="PR:Q9DB77"/>
<dbReference type="Proteomes" id="UP000000589">
    <property type="component" value="Chromosome 7"/>
</dbReference>
<dbReference type="RNAct" id="Q9DB77">
    <property type="molecule type" value="protein"/>
</dbReference>
<dbReference type="Bgee" id="ENSMUSG00000030884">
    <property type="expression patterns" value="Expressed in paneth cell and 271 other cell types or tissues"/>
</dbReference>
<dbReference type="ExpressionAtlas" id="Q9DB77">
    <property type="expression patterns" value="baseline and differential"/>
</dbReference>
<dbReference type="GO" id="GO:0005743">
    <property type="term" value="C:mitochondrial inner membrane"/>
    <property type="evidence" value="ECO:0000314"/>
    <property type="project" value="UniProtKB"/>
</dbReference>
<dbReference type="GO" id="GO:0005739">
    <property type="term" value="C:mitochondrion"/>
    <property type="evidence" value="ECO:0000314"/>
    <property type="project" value="MGI"/>
</dbReference>
<dbReference type="GO" id="GO:0043209">
    <property type="term" value="C:myelin sheath"/>
    <property type="evidence" value="ECO:0007005"/>
    <property type="project" value="UniProtKB"/>
</dbReference>
<dbReference type="GO" id="GO:0005654">
    <property type="term" value="C:nucleoplasm"/>
    <property type="evidence" value="ECO:0007669"/>
    <property type="project" value="Ensembl"/>
</dbReference>
<dbReference type="GO" id="GO:0045275">
    <property type="term" value="C:respiratory chain complex III"/>
    <property type="evidence" value="ECO:0000314"/>
    <property type="project" value="UniProtKB"/>
</dbReference>
<dbReference type="GO" id="GO:0046872">
    <property type="term" value="F:metal ion binding"/>
    <property type="evidence" value="ECO:0007669"/>
    <property type="project" value="InterPro"/>
</dbReference>
<dbReference type="GO" id="GO:0004222">
    <property type="term" value="F:metalloendopeptidase activity"/>
    <property type="evidence" value="ECO:0007669"/>
    <property type="project" value="InterPro"/>
</dbReference>
<dbReference type="GO" id="GO:0044877">
    <property type="term" value="F:protein-containing complex binding"/>
    <property type="evidence" value="ECO:0007669"/>
    <property type="project" value="Ensembl"/>
</dbReference>
<dbReference type="GO" id="GO:0045333">
    <property type="term" value="P:cellular respiration"/>
    <property type="evidence" value="ECO:0000303"/>
    <property type="project" value="ComplexPortal"/>
</dbReference>
<dbReference type="GO" id="GO:0006122">
    <property type="term" value="P:mitochondrial electron transport, ubiquinol to cytochrome c"/>
    <property type="evidence" value="ECO:0000303"/>
    <property type="project" value="ComplexPortal"/>
</dbReference>
<dbReference type="GO" id="GO:0006508">
    <property type="term" value="P:proteolysis"/>
    <property type="evidence" value="ECO:0007669"/>
    <property type="project" value="InterPro"/>
</dbReference>
<dbReference type="GO" id="GO:0009410">
    <property type="term" value="P:response to xenobiotic stimulus"/>
    <property type="evidence" value="ECO:0007669"/>
    <property type="project" value="Ensembl"/>
</dbReference>
<dbReference type="FunFam" id="3.30.830.10:FF:000018">
    <property type="entry name" value="Cytochrome b-c1 complex subunit 2, mitochondrial"/>
    <property type="match status" value="1"/>
</dbReference>
<dbReference type="FunFam" id="3.30.830.10:FF:000026">
    <property type="entry name" value="Cytochrome b-c1 complex subunit 2, mitochondrial"/>
    <property type="match status" value="1"/>
</dbReference>
<dbReference type="Gene3D" id="3.30.830.10">
    <property type="entry name" value="Metalloenzyme, LuxS/M16 peptidase-like"/>
    <property type="match status" value="2"/>
</dbReference>
<dbReference type="InterPro" id="IPR011249">
    <property type="entry name" value="Metalloenz_LuxS/M16"/>
</dbReference>
<dbReference type="InterPro" id="IPR050361">
    <property type="entry name" value="MPP/UQCRC_Complex"/>
</dbReference>
<dbReference type="InterPro" id="IPR011765">
    <property type="entry name" value="Pept_M16_N"/>
</dbReference>
<dbReference type="InterPro" id="IPR001431">
    <property type="entry name" value="Pept_M16_Zn_BS"/>
</dbReference>
<dbReference type="InterPro" id="IPR007863">
    <property type="entry name" value="Peptidase_M16_C"/>
</dbReference>
<dbReference type="PANTHER" id="PTHR11851:SF226">
    <property type="entry name" value="CYTOCHROME B-C1 COMPLEX SUBUNIT 2, MITOCHONDRIAL"/>
    <property type="match status" value="1"/>
</dbReference>
<dbReference type="PANTHER" id="PTHR11851">
    <property type="entry name" value="METALLOPROTEASE"/>
    <property type="match status" value="1"/>
</dbReference>
<dbReference type="Pfam" id="PF00675">
    <property type="entry name" value="Peptidase_M16"/>
    <property type="match status" value="1"/>
</dbReference>
<dbReference type="Pfam" id="PF05193">
    <property type="entry name" value="Peptidase_M16_C"/>
    <property type="match status" value="1"/>
</dbReference>
<dbReference type="SUPFAM" id="SSF63411">
    <property type="entry name" value="LuxS/MPP-like metallohydrolase"/>
    <property type="match status" value="2"/>
</dbReference>
<dbReference type="PROSITE" id="PS00143">
    <property type="entry name" value="INSULINASE"/>
    <property type="match status" value="1"/>
</dbReference>
<reference key="1">
    <citation type="journal article" date="2005" name="Science">
        <title>The transcriptional landscape of the mammalian genome.</title>
        <authorList>
            <person name="Carninci P."/>
            <person name="Kasukawa T."/>
            <person name="Katayama S."/>
            <person name="Gough J."/>
            <person name="Frith M.C."/>
            <person name="Maeda N."/>
            <person name="Oyama R."/>
            <person name="Ravasi T."/>
            <person name="Lenhard B."/>
            <person name="Wells C."/>
            <person name="Kodzius R."/>
            <person name="Shimokawa K."/>
            <person name="Bajic V.B."/>
            <person name="Brenner S.E."/>
            <person name="Batalov S."/>
            <person name="Forrest A.R."/>
            <person name="Zavolan M."/>
            <person name="Davis M.J."/>
            <person name="Wilming L.G."/>
            <person name="Aidinis V."/>
            <person name="Allen J.E."/>
            <person name="Ambesi-Impiombato A."/>
            <person name="Apweiler R."/>
            <person name="Aturaliya R.N."/>
            <person name="Bailey T.L."/>
            <person name="Bansal M."/>
            <person name="Baxter L."/>
            <person name="Beisel K.W."/>
            <person name="Bersano T."/>
            <person name="Bono H."/>
            <person name="Chalk A.M."/>
            <person name="Chiu K.P."/>
            <person name="Choudhary V."/>
            <person name="Christoffels A."/>
            <person name="Clutterbuck D.R."/>
            <person name="Crowe M.L."/>
            <person name="Dalla E."/>
            <person name="Dalrymple B.P."/>
            <person name="de Bono B."/>
            <person name="Della Gatta G."/>
            <person name="di Bernardo D."/>
            <person name="Down T."/>
            <person name="Engstrom P."/>
            <person name="Fagiolini M."/>
            <person name="Faulkner G."/>
            <person name="Fletcher C.F."/>
            <person name="Fukushima T."/>
            <person name="Furuno M."/>
            <person name="Futaki S."/>
            <person name="Gariboldi M."/>
            <person name="Georgii-Hemming P."/>
            <person name="Gingeras T.R."/>
            <person name="Gojobori T."/>
            <person name="Green R.E."/>
            <person name="Gustincich S."/>
            <person name="Harbers M."/>
            <person name="Hayashi Y."/>
            <person name="Hensch T.K."/>
            <person name="Hirokawa N."/>
            <person name="Hill D."/>
            <person name="Huminiecki L."/>
            <person name="Iacono M."/>
            <person name="Ikeo K."/>
            <person name="Iwama A."/>
            <person name="Ishikawa T."/>
            <person name="Jakt M."/>
            <person name="Kanapin A."/>
            <person name="Katoh M."/>
            <person name="Kawasawa Y."/>
            <person name="Kelso J."/>
            <person name="Kitamura H."/>
            <person name="Kitano H."/>
            <person name="Kollias G."/>
            <person name="Krishnan S.P."/>
            <person name="Kruger A."/>
            <person name="Kummerfeld S.K."/>
            <person name="Kurochkin I.V."/>
            <person name="Lareau L.F."/>
            <person name="Lazarevic D."/>
            <person name="Lipovich L."/>
            <person name="Liu J."/>
            <person name="Liuni S."/>
            <person name="McWilliam S."/>
            <person name="Madan Babu M."/>
            <person name="Madera M."/>
            <person name="Marchionni L."/>
            <person name="Matsuda H."/>
            <person name="Matsuzawa S."/>
            <person name="Miki H."/>
            <person name="Mignone F."/>
            <person name="Miyake S."/>
            <person name="Morris K."/>
            <person name="Mottagui-Tabar S."/>
            <person name="Mulder N."/>
            <person name="Nakano N."/>
            <person name="Nakauchi H."/>
            <person name="Ng P."/>
            <person name="Nilsson R."/>
            <person name="Nishiguchi S."/>
            <person name="Nishikawa S."/>
            <person name="Nori F."/>
            <person name="Ohara O."/>
            <person name="Okazaki Y."/>
            <person name="Orlando V."/>
            <person name="Pang K.C."/>
            <person name="Pavan W.J."/>
            <person name="Pavesi G."/>
            <person name="Pesole G."/>
            <person name="Petrovsky N."/>
            <person name="Piazza S."/>
            <person name="Reed J."/>
            <person name="Reid J.F."/>
            <person name="Ring B.Z."/>
            <person name="Ringwald M."/>
            <person name="Rost B."/>
            <person name="Ruan Y."/>
            <person name="Salzberg S.L."/>
            <person name="Sandelin A."/>
            <person name="Schneider C."/>
            <person name="Schoenbach C."/>
            <person name="Sekiguchi K."/>
            <person name="Semple C.A."/>
            <person name="Seno S."/>
            <person name="Sessa L."/>
            <person name="Sheng Y."/>
            <person name="Shibata Y."/>
            <person name="Shimada H."/>
            <person name="Shimada K."/>
            <person name="Silva D."/>
            <person name="Sinclair B."/>
            <person name="Sperling S."/>
            <person name="Stupka E."/>
            <person name="Sugiura K."/>
            <person name="Sultana R."/>
            <person name="Takenaka Y."/>
            <person name="Taki K."/>
            <person name="Tammoja K."/>
            <person name="Tan S.L."/>
            <person name="Tang S."/>
            <person name="Taylor M.S."/>
            <person name="Tegner J."/>
            <person name="Teichmann S.A."/>
            <person name="Ueda H.R."/>
            <person name="van Nimwegen E."/>
            <person name="Verardo R."/>
            <person name="Wei C.L."/>
            <person name="Yagi K."/>
            <person name="Yamanishi H."/>
            <person name="Zabarovsky E."/>
            <person name="Zhu S."/>
            <person name="Zimmer A."/>
            <person name="Hide W."/>
            <person name="Bult C."/>
            <person name="Grimmond S.M."/>
            <person name="Teasdale R.D."/>
            <person name="Liu E.T."/>
            <person name="Brusic V."/>
            <person name="Quackenbush J."/>
            <person name="Wahlestedt C."/>
            <person name="Mattick J.S."/>
            <person name="Hume D.A."/>
            <person name="Kai C."/>
            <person name="Sasaki D."/>
            <person name="Tomaru Y."/>
            <person name="Fukuda S."/>
            <person name="Kanamori-Katayama M."/>
            <person name="Suzuki M."/>
            <person name="Aoki J."/>
            <person name="Arakawa T."/>
            <person name="Iida J."/>
            <person name="Imamura K."/>
            <person name="Itoh M."/>
            <person name="Kato T."/>
            <person name="Kawaji H."/>
            <person name="Kawagashira N."/>
            <person name="Kawashima T."/>
            <person name="Kojima M."/>
            <person name="Kondo S."/>
            <person name="Konno H."/>
            <person name="Nakano K."/>
            <person name="Ninomiya N."/>
            <person name="Nishio T."/>
            <person name="Okada M."/>
            <person name="Plessy C."/>
            <person name="Shibata K."/>
            <person name="Shiraki T."/>
            <person name="Suzuki S."/>
            <person name="Tagami M."/>
            <person name="Waki K."/>
            <person name="Watahiki A."/>
            <person name="Okamura-Oho Y."/>
            <person name="Suzuki H."/>
            <person name="Kawai J."/>
            <person name="Hayashizaki Y."/>
        </authorList>
    </citation>
    <scope>NUCLEOTIDE SEQUENCE [LARGE SCALE MRNA]</scope>
    <source>
        <strain>C57BL/6J</strain>
        <tissue>Cerebellum</tissue>
        <tissue>Pancreas</tissue>
        <tissue>Thymus</tissue>
    </source>
</reference>
<reference key="2">
    <citation type="journal article" date="2004" name="Genome Res.">
        <title>The status, quality, and expansion of the NIH full-length cDNA project: the Mammalian Gene Collection (MGC).</title>
        <authorList>
            <consortium name="The MGC Project Team"/>
        </authorList>
    </citation>
    <scope>NUCLEOTIDE SEQUENCE [LARGE SCALE MRNA]</scope>
</reference>
<reference key="3">
    <citation type="submission" date="2007-07" db="UniProtKB">
        <authorList>
            <person name="Lubec G."/>
            <person name="Kang S.U."/>
            <person name="Klug S."/>
            <person name="Yang J.W."/>
            <person name="Zigmond M."/>
        </authorList>
    </citation>
    <scope>PROTEIN SEQUENCE OF 24-60; 71-85; 117-147; 163-196; 200-241; 301-315; 360-375 AND 436-453</scope>
    <scope>IDENTIFICATION BY MASS SPECTROMETRY</scope>
    <source>
        <strain>C57BL/6J</strain>
        <tissue>Brain</tissue>
        <tissue>Hippocampus</tissue>
    </source>
</reference>
<reference key="4">
    <citation type="journal article" date="2008" name="Mol. Cell">
        <title>Respiratory active mitochondrial supercomplexes.</title>
        <authorList>
            <person name="Acin-Perez R."/>
            <person name="Fernandez-Silva P."/>
            <person name="Peleato M.L."/>
            <person name="Perez-Martos A."/>
            <person name="Enriquez J.A."/>
        </authorList>
    </citation>
    <scope>SUBUNIT</scope>
</reference>
<reference key="5">
    <citation type="journal article" date="2010" name="Cell">
        <title>A tissue-specific atlas of mouse protein phosphorylation and expression.</title>
        <authorList>
            <person name="Huttlin E.L."/>
            <person name="Jedrychowski M.P."/>
            <person name="Elias J.E."/>
            <person name="Goswami T."/>
            <person name="Rad R."/>
            <person name="Beausoleil S.A."/>
            <person name="Villen J."/>
            <person name="Haas W."/>
            <person name="Sowa M.E."/>
            <person name="Gygi S.P."/>
        </authorList>
    </citation>
    <scope>IDENTIFICATION BY MASS SPECTROMETRY [LARGE SCALE ANALYSIS]</scope>
    <source>
        <tissue>Brain</tissue>
        <tissue>Brown adipose tissue</tissue>
        <tissue>Heart</tissue>
        <tissue>Kidney</tissue>
        <tissue>Liver</tissue>
        <tissue>Lung</tissue>
        <tissue>Pancreas</tissue>
        <tissue>Spleen</tissue>
        <tissue>Testis</tissue>
    </source>
</reference>
<reference key="6">
    <citation type="journal article" date="2013" name="Proc. Natl. Acad. Sci. U.S.A.">
        <title>Label-free quantitative proteomics of the lysine acetylome in mitochondria identifies substrates of SIRT3 in metabolic pathways.</title>
        <authorList>
            <person name="Rardin M.J."/>
            <person name="Newman J.C."/>
            <person name="Held J.M."/>
            <person name="Cusack M.P."/>
            <person name="Sorensen D.J."/>
            <person name="Li B."/>
            <person name="Schilling B."/>
            <person name="Mooney S.D."/>
            <person name="Kahn C.R."/>
            <person name="Verdin E."/>
            <person name="Gibson B.W."/>
        </authorList>
    </citation>
    <scope>ACETYLATION [LARGE SCALE ANALYSIS] AT LYS-66; LYS-199 AND LYS-250</scope>
    <scope>IDENTIFICATION BY MASS SPECTROMETRY [LARGE SCALE ANALYSIS]</scope>
    <source>
        <tissue>Liver</tissue>
    </source>
</reference>
<reference key="7">
    <citation type="journal article" date="2019" name="Cell. Mol. Life Sci.">
        <title>Critical role of UQCRC1 in embryo survival, brain ischemic tolerance and normal cognition in mice.</title>
        <authorList>
            <person name="Shan W."/>
            <person name="Li J."/>
            <person name="Xu W."/>
            <person name="Li H."/>
            <person name="Zuo Z."/>
        </authorList>
    </citation>
    <scope>SUBUNIT</scope>
    <scope>TISSUE SPECIFICITY</scope>
</reference>
<reference key="8">
    <citation type="journal article" date="2019" name="IScience">
        <title>Rewiring of the Human Mitochondrial Interactome during Neuronal Reprogramming Reveals Regulators of the Respirasome and Neurogenesis.</title>
        <authorList>
            <person name="Moutaoufik M.T."/>
            <person name="Malty R."/>
            <person name="Amin S."/>
            <person name="Zhang Q."/>
            <person name="Phanse S."/>
            <person name="Gagarinova A."/>
            <person name="Zilocchi M."/>
            <person name="Hoell L."/>
            <person name="Minic Z."/>
            <person name="Gagarinova M."/>
            <person name="Aoki H."/>
            <person name="Stockwell J."/>
            <person name="Jessulat M."/>
            <person name="Goebels F."/>
            <person name="Broderick K."/>
            <person name="Scott N.E."/>
            <person name="Vlasblom J."/>
            <person name="Musso G."/>
            <person name="Prasad B."/>
            <person name="Lamantea E."/>
            <person name="Garavaglia B."/>
            <person name="Rajput A."/>
            <person name="Murayama K."/>
            <person name="Okazaki Y."/>
            <person name="Foster L.J."/>
            <person name="Bader G.D."/>
            <person name="Cayabyab F.S."/>
            <person name="Babu M."/>
        </authorList>
    </citation>
    <scope>INTERACTION WITH RAB5IF</scope>
</reference>
<reference key="9">
    <citation type="journal article" date="2022" name="Proc. Natl. Acad. Sci. U.S.A.">
        <title>The cardiac-enriched microprotein mitolamban regulates mitochondrial respiratory complex assembly and function in mice.</title>
        <authorList>
            <person name="Makarewich C.A."/>
            <person name="Munir A.Z."/>
            <person name="Bezprozvannaya S."/>
            <person name="Gibson A.M."/>
            <person name="Young Kim S."/>
            <person name="Martin-Sandoval M.S."/>
            <person name="Mathews T.P."/>
            <person name="Szweda L.I."/>
            <person name="Bassel-Duby R."/>
            <person name="Olson E.N."/>
        </authorList>
    </citation>
    <scope>INTERACTION WITH STMP1</scope>
</reference>
<reference evidence="12 13 14" key="10">
    <citation type="journal article" date="2021" name="Nature">
        <title>Structure and assembly of the mammalian mitochondrial supercomplex CIII2CIV.</title>
        <authorList>
            <person name="Vercellino I."/>
            <person name="Sazanov L.A."/>
        </authorList>
    </citation>
    <scope>STRUCTURE BY ELECTRON MICROSCOPY (3.20 ANGSTROMS) IN COMPLEX WITH MITOCHONDRIAL RESPIRATORY SUPERCOMPLEX</scope>
    <scope>FUNCTION</scope>
    <scope>SUBCELLULAR LOCATION</scope>
    <scope>SUBUNIT</scope>
</reference>
<reference evidence="15" key="11">
    <citation type="journal article" date="2024" name="Nat. Struct. Mol. Biol.">
        <title>SCAF1 drives the compositional diversity of mammalian respirasomes.</title>
        <authorList>
            <person name="Vercellino I."/>
            <person name="Sazanov L.A."/>
        </authorList>
    </citation>
    <scope>STRUCTURE BY ELECTRON MICROSCOPY (3.60 ANGSTROMS) IN COMPLEX WITH MITOCHONDRIAL RESPIRATORY SUPERCOMPLEX</scope>
    <scope>FUNCTION</scope>
    <scope>SUBCELLULAR LOCATION</scope>
    <scope>SUBUNIT</scope>
</reference>
<keyword id="KW-0002">3D-structure</keyword>
<keyword id="KW-0007">Acetylation</keyword>
<keyword id="KW-0903">Direct protein sequencing</keyword>
<keyword id="KW-0249">Electron transport</keyword>
<keyword id="KW-0472">Membrane</keyword>
<keyword id="KW-0496">Mitochondrion</keyword>
<keyword id="KW-0999">Mitochondrion inner membrane</keyword>
<keyword id="KW-0597">Phosphoprotein</keyword>
<keyword id="KW-1185">Reference proteome</keyword>
<keyword id="KW-0679">Respiratory chain</keyword>
<keyword id="KW-0809">Transit peptide</keyword>
<keyword id="KW-0813">Transport</keyword>
<sequence length="453" mass="48235">MKLLSRAGSFSRFYSLKVAPKVKTSAAPGGVPLQPQDLEFTKLPNGLVIASLENYAPLSRIGLFVKAGSRYEDSNNLGTSHLLRLASSLTTKGASSFKITRGIEAVGGKLSVTATRENMAYTVEGIRSDIEILMEFLLNVTTAPEFRRWEVAALRSQLKIDKAVAFQNSQTRIIENLHDVAYKNALANPLYCPDYRMGKITSEELHYFVQNHFTSARMALVGLGVSHSVLKQVAEQFLNMRGGLGLAGAKAKYRGGEIREQNGDNLVHAAIVAESAAIGNAEANAFSVLQHLLGAGPHIKRGNNTTSLLSQSVAKGSHQPFDVSAFNASYSDSGLFGIYTISQAAAAGEVINAAYNQVKAVAQGNLSSADVQAAKNKLKAGYLMSVETSEGFLSEIGSQALAAGSYMPPSTVLQQIDSVADADVVKAAKKFVSGKKSMAASGNLGHTPFLDEL</sequence>
<protein>
    <recommendedName>
        <fullName>Cytochrome b-c1 complex subunit 2, mitochondrial</fullName>
    </recommendedName>
    <alternativeName>
        <fullName>Complex III subunit 2</fullName>
    </alternativeName>
    <alternativeName>
        <fullName>Core protein II</fullName>
    </alternativeName>
    <alternativeName>
        <fullName>Ubiquinol-cytochrome-c reductase complex core protein 2</fullName>
    </alternativeName>
</protein>
<feature type="transit peptide" description="Mitochondrion" evidence="1">
    <location>
        <begin position="1"/>
        <end position="14"/>
    </location>
</feature>
<feature type="chain" id="PRO_0000026792" description="Cytochrome b-c1 complex subunit 2, mitochondrial">
    <location>
        <begin position="15"/>
        <end position="453"/>
    </location>
</feature>
<feature type="modified residue" description="N6-acetyllysine" evidence="16">
    <location>
        <position position="66"/>
    </location>
</feature>
<feature type="modified residue" description="N6-acetyllysine" evidence="16">
    <location>
        <position position="199"/>
    </location>
</feature>
<feature type="modified residue" description="N6-acetyllysine" evidence="16">
    <location>
        <position position="250"/>
    </location>
</feature>
<feature type="modified residue" description="Phosphoserine" evidence="4">
    <location>
        <position position="368"/>
    </location>
</feature>
<feature type="sequence conflict" description="In Ref. 1; BAB25176." evidence="11" ref="1">
    <original>Q</original>
    <variation>L</variation>
    <location>
        <position position="36"/>
    </location>
</feature>
<feature type="sequence conflict" description="In Ref. 1; BAC36876." evidence="11" ref="1">
    <original>Q</original>
    <variation>R</variation>
    <location>
        <position position="319"/>
    </location>
</feature>
<feature type="strand" evidence="19">
    <location>
        <begin position="39"/>
        <end position="42"/>
    </location>
</feature>
<feature type="strand" evidence="19">
    <location>
        <begin position="48"/>
        <end position="52"/>
    </location>
</feature>
<feature type="strand" evidence="19">
    <location>
        <begin position="57"/>
        <end position="66"/>
    </location>
</feature>
<feature type="helix" evidence="19">
    <location>
        <begin position="69"/>
        <end position="71"/>
    </location>
</feature>
<feature type="strand" evidence="18">
    <location>
        <begin position="74"/>
        <end position="76"/>
    </location>
</feature>
<feature type="helix" evidence="19">
    <location>
        <begin position="79"/>
        <end position="85"/>
    </location>
</feature>
<feature type="turn" evidence="19">
    <location>
        <begin position="86"/>
        <end position="88"/>
    </location>
</feature>
<feature type="strand" evidence="18">
    <location>
        <begin position="91"/>
        <end position="93"/>
    </location>
</feature>
<feature type="helix" evidence="19">
    <location>
        <begin position="96"/>
        <end position="105"/>
    </location>
</feature>
<feature type="strand" evidence="19">
    <location>
        <begin position="109"/>
        <end position="114"/>
    </location>
</feature>
<feature type="strand" evidence="19">
    <location>
        <begin position="119"/>
        <end position="126"/>
    </location>
</feature>
<feature type="turn" evidence="19">
    <location>
        <begin position="127"/>
        <end position="129"/>
    </location>
</feature>
<feature type="helix" evidence="19">
    <location>
        <begin position="130"/>
        <end position="142"/>
    </location>
</feature>
<feature type="helix" evidence="19">
    <location>
        <begin position="148"/>
        <end position="165"/>
    </location>
</feature>
<feature type="helix" evidence="19">
    <location>
        <begin position="169"/>
        <end position="181"/>
    </location>
</feature>
<feature type="strand" evidence="19">
    <location>
        <begin position="182"/>
        <end position="185"/>
    </location>
</feature>
<feature type="turn" evidence="19">
    <location>
        <begin position="194"/>
        <end position="199"/>
    </location>
</feature>
<feature type="helix" evidence="19">
    <location>
        <begin position="202"/>
        <end position="212"/>
    </location>
</feature>
<feature type="helix" evidence="19">
    <location>
        <begin position="215"/>
        <end position="217"/>
    </location>
</feature>
<feature type="strand" evidence="19">
    <location>
        <begin position="218"/>
        <end position="225"/>
    </location>
</feature>
<feature type="helix" evidence="19">
    <location>
        <begin position="227"/>
        <end position="237"/>
    </location>
</feature>
<feature type="strand" evidence="19">
    <location>
        <begin position="256"/>
        <end position="261"/>
    </location>
</feature>
<feature type="strand" evidence="19">
    <location>
        <begin position="265"/>
        <end position="275"/>
    </location>
</feature>
<feature type="strand" evidence="17">
    <location>
        <begin position="278"/>
        <end position="280"/>
    </location>
</feature>
<feature type="helix" evidence="19">
    <location>
        <begin position="281"/>
        <end position="293"/>
    </location>
</feature>
<feature type="helix" evidence="19">
    <location>
        <begin position="308"/>
        <end position="314"/>
    </location>
</feature>
<feature type="strand" evidence="19">
    <location>
        <begin position="322"/>
        <end position="330"/>
    </location>
</feature>
<feature type="strand" evidence="19">
    <location>
        <begin position="333"/>
        <end position="344"/>
    </location>
</feature>
<feature type="helix" evidence="19">
    <location>
        <begin position="347"/>
        <end position="362"/>
    </location>
</feature>
<feature type="helix" evidence="19">
    <location>
        <begin position="368"/>
        <end position="386"/>
    </location>
</feature>
<feature type="helix" evidence="19">
    <location>
        <begin position="389"/>
        <end position="402"/>
    </location>
</feature>
<feature type="helix" evidence="19">
    <location>
        <begin position="409"/>
        <end position="417"/>
    </location>
</feature>
<feature type="helix" evidence="19">
    <location>
        <begin position="421"/>
        <end position="433"/>
    </location>
</feature>
<feature type="strand" evidence="19">
    <location>
        <begin position="436"/>
        <end position="442"/>
    </location>
</feature>
<feature type="helix" evidence="17">
    <location>
        <begin position="450"/>
        <end position="452"/>
    </location>
</feature>
<accession>Q9DB77</accession>
<accession>Q8BK11</accession>
<accession>Q9CVK7</accession>
<evidence type="ECO:0000250" key="1"/>
<evidence type="ECO:0000250" key="2">
    <source>
        <dbReference type="UniProtKB" id="P07257"/>
    </source>
</evidence>
<evidence type="ECO:0000250" key="3">
    <source>
        <dbReference type="UniProtKB" id="P23004"/>
    </source>
</evidence>
<evidence type="ECO:0000250" key="4">
    <source>
        <dbReference type="UniProtKB" id="P32551"/>
    </source>
</evidence>
<evidence type="ECO:0000269" key="5">
    <source>
    </source>
</evidence>
<evidence type="ECO:0000269" key="6">
    <source>
    </source>
</evidence>
<evidence type="ECO:0000269" key="7">
    <source>
    </source>
</evidence>
<evidence type="ECO:0000269" key="8">
    <source>
    </source>
</evidence>
<evidence type="ECO:0000269" key="9">
    <source>
    </source>
</evidence>
<evidence type="ECO:0000269" key="10">
    <source>
    </source>
</evidence>
<evidence type="ECO:0000305" key="11"/>
<evidence type="ECO:0000312" key="12">
    <source>
        <dbReference type="PDB" id="7O3E"/>
    </source>
</evidence>
<evidence type="ECO:0007744" key="13">
    <source>
        <dbReference type="PDB" id="7O37"/>
    </source>
</evidence>
<evidence type="ECO:0007744" key="14">
    <source>
        <dbReference type="PDB" id="7O3C"/>
    </source>
</evidence>
<evidence type="ECO:0007744" key="15">
    <source>
        <dbReference type="PDB" id="8PW5"/>
    </source>
</evidence>
<evidence type="ECO:0007744" key="16">
    <source>
    </source>
</evidence>
<evidence type="ECO:0007829" key="17">
    <source>
        <dbReference type="PDB" id="7O37"/>
    </source>
</evidence>
<evidence type="ECO:0007829" key="18">
    <source>
        <dbReference type="PDB" id="7O3C"/>
    </source>
</evidence>
<evidence type="ECO:0007829" key="19">
    <source>
        <dbReference type="PDB" id="7O3H"/>
    </source>
</evidence>
<comment type="function">
    <text evidence="2 3 8 10">Component of the ubiquinol-cytochrome c oxidoreductase, a multisubunit transmembrane complex that is part of the mitochondrial electron transport chain which drives oxidative phosphorylation (PubMed:34616041, PubMed:38575788). The respiratory chain contains 3 multisubunit complexes succinate dehydrogenase (complex II, CII), ubiquinol-cytochrome c oxidoreductase (cytochrome b-c1 complex, complex III, CIII) and cytochrome c oxidase (complex IV, CIV), that cooperate to transfer electrons derived from NADH and succinate to molecular oxygen, creating an electrochemical gradient over the inner membrane that drives transmembrane transport and the ATP synthase (PubMed:34616041, PubMed:38575788). The cytochrome b-c1 complex catalyzes electron transfer from ubiquinol to cytochrome c, linking this redox reaction to translocation of protons across the mitochondrial inner membrane, with protons being carried across the membrane as hydrogens on the quinol (PubMed:34616041, PubMed:38575788). In the process called Q cycle, 2 protons are consumed from the matrix, 4 protons are released into the intermembrane space and 2 electrons are passed to cytochrome c (By similarity). The 2 core subunits UQCRC1/QCR1 and UQCRC2/QCR2 are homologous to the 2 mitochondrial-processing peptidase (MPP) subunits beta-MPP and alpha-MPP respectively, and they seem to have preserved their MPP processing properties. May be involved in the in situ processing of UQCRFS1 into the mature Rieske protein and its mitochondrial targeting sequence (MTS)/subunit 9 when incorporated into complex III (By similarity).</text>
</comment>
<comment type="subunit">
    <text evidence="5 6 7 8 9 10">Component of the ubiquinol-cytochrome c oxidoreductase (cytochrome b-c1 complex, complex III, CIII), a multisubunit enzyme composed of 11 subunits (PubMed:34616041, PubMed:38575788). The complex is composed of 3 respiratory subunits cytochrome b, cytochrome c1 and Rieske protein UQCRFS1, 2 core protein subunits UQCRC1/QCR1 and UQCRC2/QCR2, and 6 low-molecular weight protein subunits UQCRH/QCR6, UQCRB/QCR7, UQCRQ/QCR8, UQCR10/QCR9, UQCR11/QCR10 and subunit 9, the cleavage product of Rieske protein UQCRFS1 (PubMed:34616041, PubMed:38575788). The complex exists as an obligatory dimer and forms supercomplexes (SCs) in the inner mitochondrial membrane with NADH-ubiquinone oxidoreductase (complex I, CI) and cytochrome c oxidase (complex IV, CIV), resulting in different assemblies (supercomplex SCI(1)III(2)IV(1) and megacomplex MCI(2)III(2)IV(2)) (PubMed:19026783, PubMed:30666338, PubMed:34616041, PubMed:38575788). Interacts with RAB5IF (PubMed:31536960). Interacts with STMP1 (PubMed:35101990).</text>
</comment>
<comment type="subcellular location">
    <subcellularLocation>
        <location evidence="8 10">Mitochondrion inner membrane</location>
        <topology evidence="8 10">Peripheral membrane protein</topology>
        <orientation evidence="8 10">Matrix side</orientation>
    </subcellularLocation>
</comment>
<comment type="tissue specificity">
    <text evidence="6">Expressed in neurons and astrocytes of the cerebral cortex and hippocampus (at protein level).</text>
</comment>
<comment type="PTM">
    <text>Acetylation of Lys-159 and Lys-250 is observed in liver mitochondria from fasted mice but not from fed mice.</text>
</comment>
<comment type="similarity">
    <text evidence="11">Belongs to the peptidase M16 family. UQCRC2/QCR2 subfamily.</text>
</comment>